<organism>
    <name type="scientific">Macaca fascicularis</name>
    <name type="common">Crab-eating macaque</name>
    <name type="synonym">Cynomolgus monkey</name>
    <dbReference type="NCBI Taxonomy" id="9541"/>
    <lineage>
        <taxon>Eukaryota</taxon>
        <taxon>Metazoa</taxon>
        <taxon>Chordata</taxon>
        <taxon>Craniata</taxon>
        <taxon>Vertebrata</taxon>
        <taxon>Euteleostomi</taxon>
        <taxon>Mammalia</taxon>
        <taxon>Eutheria</taxon>
        <taxon>Euarchontoglires</taxon>
        <taxon>Primates</taxon>
        <taxon>Haplorrhini</taxon>
        <taxon>Catarrhini</taxon>
        <taxon>Cercopithecidae</taxon>
        <taxon>Cercopithecinae</taxon>
        <taxon>Macaca</taxon>
    </lineage>
</organism>
<sequence>MGKGGNQGEGAAEREVPMPTFSWEEIQKHNLRTDRWLVIDRKVYNITKWSTQHPGGQRVIGHYAGEDATDAFRAFHPDLKFVGKFLKPLLIGELAPEEPSQDHGKNSKIIEDFRALKKTAEDMNLFKTNHVFFLLLLAHIIALESIAWFTVFYFGNGWIPTLITAFVLATSQAQAGWLQHDYGHLSVYRKPKWNHLVHKFVIGHLKGASANWWNHRHFQHHAKPNIFHKDPDVNMLHVFVLGEWQPIEYGKKKLKYLPYNHQHEYFFLIGPPLLIPMYFQYQIIMTMIVHKNWVDLAWAISYYIRFFVTYIPFYGILGALLFLNFIRFLESHWFVWVTQMNHIVMEIDQEAYRDWFSSQLTATCNVEQSFFNDWFSGHLNFQIEHHLFPTMPRHNLHKIAPLVKSLCAKHGIEYQEKPLLRALLDIIRSLRKSGKLWLDAYLHK</sequence>
<accession>Q4R749</accession>
<dbReference type="EC" id="1.14.19.3" evidence="2"/>
<dbReference type="EMBL" id="AB168976">
    <property type="protein sequence ID" value="BAE01074.1"/>
    <property type="molecule type" value="mRNA"/>
</dbReference>
<dbReference type="RefSeq" id="XP_005577676.1">
    <property type="nucleotide sequence ID" value="XM_005577619.4"/>
</dbReference>
<dbReference type="SMR" id="Q4R749"/>
<dbReference type="STRING" id="9541.ENSMFAP00000007686"/>
<dbReference type="GeneID" id="101926688"/>
<dbReference type="KEGG" id="mcf:101926688"/>
<dbReference type="CTD" id="9415"/>
<dbReference type="VEuPathDB" id="HostDB:ENSMFAG00000042844"/>
<dbReference type="eggNOG" id="KOG4232">
    <property type="taxonomic scope" value="Eukaryota"/>
</dbReference>
<dbReference type="OMA" id="QWWKNKH"/>
<dbReference type="OrthoDB" id="3257at314294"/>
<dbReference type="UniPathway" id="UPA00658"/>
<dbReference type="Proteomes" id="UP000233100">
    <property type="component" value="Chromosome 14"/>
</dbReference>
<dbReference type="GO" id="GO:0005789">
    <property type="term" value="C:endoplasmic reticulum membrane"/>
    <property type="evidence" value="ECO:0007669"/>
    <property type="project" value="UniProtKB-SubCell"/>
</dbReference>
<dbReference type="GO" id="GO:0016213">
    <property type="term" value="F:acyl-CoA 6-desaturase activity"/>
    <property type="evidence" value="ECO:0007669"/>
    <property type="project" value="UniProtKB-EC"/>
</dbReference>
<dbReference type="GO" id="GO:0006636">
    <property type="term" value="P:unsaturated fatty acid biosynthetic process"/>
    <property type="evidence" value="ECO:0007669"/>
    <property type="project" value="UniProtKB-UniPathway"/>
</dbReference>
<dbReference type="CDD" id="cd03506">
    <property type="entry name" value="Delta6-FADS-like"/>
    <property type="match status" value="1"/>
</dbReference>
<dbReference type="FunFam" id="3.10.120.10:FF:000010">
    <property type="entry name" value="Delta-6 fatty acyl desaturase"/>
    <property type="match status" value="1"/>
</dbReference>
<dbReference type="Gene3D" id="3.10.120.10">
    <property type="entry name" value="Cytochrome b5-like heme/steroid binding domain"/>
    <property type="match status" value="1"/>
</dbReference>
<dbReference type="InterPro" id="IPR001199">
    <property type="entry name" value="Cyt_B5-like_heme/steroid-bd"/>
</dbReference>
<dbReference type="InterPro" id="IPR036400">
    <property type="entry name" value="Cyt_B5-like_heme/steroid_sf"/>
</dbReference>
<dbReference type="InterPro" id="IPR005804">
    <property type="entry name" value="FA_desaturase_dom"/>
</dbReference>
<dbReference type="InterPro" id="IPR012171">
    <property type="entry name" value="Fatty_acid_desaturase"/>
</dbReference>
<dbReference type="PANTHER" id="PTHR19353:SF12">
    <property type="entry name" value="ACYL-COA 6-DESATURASE"/>
    <property type="match status" value="1"/>
</dbReference>
<dbReference type="PANTHER" id="PTHR19353">
    <property type="entry name" value="FATTY ACID DESATURASE 2"/>
    <property type="match status" value="1"/>
</dbReference>
<dbReference type="Pfam" id="PF00173">
    <property type="entry name" value="Cyt-b5"/>
    <property type="match status" value="1"/>
</dbReference>
<dbReference type="Pfam" id="PF00487">
    <property type="entry name" value="FA_desaturase"/>
    <property type="match status" value="1"/>
</dbReference>
<dbReference type="PIRSF" id="PIRSF015921">
    <property type="entry name" value="FA_sphinglp_des"/>
    <property type="match status" value="1"/>
</dbReference>
<dbReference type="PRINTS" id="PR00363">
    <property type="entry name" value="CYTOCHROMEB5"/>
</dbReference>
<dbReference type="SMART" id="SM01117">
    <property type="entry name" value="Cyt-b5"/>
    <property type="match status" value="1"/>
</dbReference>
<dbReference type="SUPFAM" id="SSF55856">
    <property type="entry name" value="Cytochrome b5-like heme/steroid binding domain"/>
    <property type="match status" value="1"/>
</dbReference>
<dbReference type="PROSITE" id="PS50255">
    <property type="entry name" value="CYTOCHROME_B5_2"/>
    <property type="match status" value="1"/>
</dbReference>
<proteinExistence type="evidence at transcript level"/>
<protein>
    <recommendedName>
        <fullName evidence="6">Acyl-CoA 6-desaturase</fullName>
        <ecNumber evidence="2">1.14.19.3</ecNumber>
    </recommendedName>
    <alternativeName>
        <fullName>Delta(6) fatty acid desaturase</fullName>
        <shortName>D6D</shortName>
        <shortName>Delta(6) desaturase</shortName>
        <shortName evidence="2">Delta-6 desaturase</shortName>
    </alternativeName>
    <alternativeName>
        <fullName evidence="2">Fatty acid desaturase 2</fullName>
    </alternativeName>
</protein>
<feature type="chain" id="PRO_0000307102" description="Acyl-CoA 6-desaturase">
    <location>
        <begin position="1"/>
        <end position="444"/>
    </location>
</feature>
<feature type="topological domain" description="Cytoplasmic" evidence="6">
    <location>
        <begin position="1"/>
        <end position="131"/>
    </location>
</feature>
<feature type="transmembrane region" description="Helical" evidence="4">
    <location>
        <begin position="132"/>
        <end position="152"/>
    </location>
</feature>
<feature type="topological domain" description="Lumenal" evidence="6">
    <location>
        <begin position="153"/>
        <end position="157"/>
    </location>
</feature>
<feature type="transmembrane region" description="Helical" evidence="4">
    <location>
        <begin position="158"/>
        <end position="178"/>
    </location>
</feature>
<feature type="topological domain" description="Cytoplasmic" evidence="6">
    <location>
        <begin position="179"/>
        <end position="264"/>
    </location>
</feature>
<feature type="transmembrane region" description="Helical" evidence="4">
    <location>
        <begin position="265"/>
        <end position="285"/>
    </location>
</feature>
<feature type="topological domain" description="Lumenal" evidence="6">
    <location>
        <begin position="286"/>
        <end position="305"/>
    </location>
</feature>
<feature type="transmembrane region" description="Helical" evidence="4">
    <location>
        <begin position="306"/>
        <end position="326"/>
    </location>
</feature>
<feature type="topological domain" description="Cytoplasmic" evidence="6">
    <location>
        <begin position="327"/>
        <end position="444"/>
    </location>
</feature>
<feature type="domain" description="Cytochrome b5 heme-binding" evidence="5">
    <location>
        <begin position="18"/>
        <end position="95"/>
    </location>
</feature>
<feature type="short sequence motif" description="Histidine box-1">
    <location>
        <begin position="180"/>
        <end position="184"/>
    </location>
</feature>
<feature type="short sequence motif" description="Histidine box-2">
    <location>
        <begin position="217"/>
        <end position="221"/>
    </location>
</feature>
<feature type="short sequence motif" description="Histidine box-3">
    <location>
        <begin position="382"/>
        <end position="386"/>
    </location>
</feature>
<evidence type="ECO:0000250" key="1">
    <source>
        <dbReference type="UniProtKB" id="B8R1K0"/>
    </source>
</evidence>
<evidence type="ECO:0000250" key="2">
    <source>
        <dbReference type="UniProtKB" id="O95864"/>
    </source>
</evidence>
<evidence type="ECO:0000250" key="3">
    <source>
        <dbReference type="UniProtKB" id="Q9Z122"/>
    </source>
</evidence>
<evidence type="ECO:0000255" key="4"/>
<evidence type="ECO:0000255" key="5">
    <source>
        <dbReference type="PROSITE-ProRule" id="PRU00279"/>
    </source>
</evidence>
<evidence type="ECO:0000305" key="6"/>
<keyword id="KW-0249">Electron transport</keyword>
<keyword id="KW-0256">Endoplasmic reticulum</keyword>
<keyword id="KW-0275">Fatty acid biosynthesis</keyword>
<keyword id="KW-0276">Fatty acid metabolism</keyword>
<keyword id="KW-0444">Lipid biosynthesis</keyword>
<keyword id="KW-0443">Lipid metabolism</keyword>
<keyword id="KW-0472">Membrane</keyword>
<keyword id="KW-0560">Oxidoreductase</keyword>
<keyword id="KW-1185">Reference proteome</keyword>
<keyword id="KW-0812">Transmembrane</keyword>
<keyword id="KW-1133">Transmembrane helix</keyword>
<keyword id="KW-0813">Transport</keyword>
<gene>
    <name type="primary">FADS2</name>
    <name type="ORF">QtsA-16313</name>
</gene>
<name>FADS2_MACFA</name>
<reference key="1">
    <citation type="submission" date="2005-06" db="EMBL/GenBank/DDBJ databases">
        <title>DNA sequences of macaque genes expressed in brain or testis and its evolutionary implications.</title>
        <authorList>
            <consortium name="International consortium for macaque cDNA sequencing and analysis"/>
        </authorList>
    </citation>
    <scope>NUCLEOTIDE SEQUENCE [LARGE SCALE MRNA]</scope>
    <source>
        <tissue>Testis</tissue>
    </source>
</reference>
<comment type="function">
    <text evidence="1 2 3">Involved in the biosynthesis of highly unsaturated fatty acids (HUFA) from the essential polyunsaturated fatty acids (PUFA) linoleic acid (LA) (18:2n-6) and alpha-linolenic acid (ALA) (18:3n-3) precursors, acting as a fatty acyl-coenzyme A (CoA) desaturase that introduces a cis double bond at carbon 6 of the fatty acyl chain. Catalyzes the first and rate limiting step in this pathway which is the desaturation of LA (18:2n-6) and ALA (18:3n-3) into gamma-linoleate (GLA) (18:3n-6) and stearidonate (18:4n-3), respectively (By similarity). Subsequently, in the biosynthetic pathway of HUFA n-3 series, it desaturates tetracosapentaenoate (24:5n-3) to tetracosahexaenoate (24:6n-3), which is then converted to docosahexaenoate (DHA)(22:6n-3), an important lipid for nervous system function (By similarity). It can also desaturate (11E)-octadecenoate (trans-vaccenoate) at carbon 6 generating (6Z,11E)-octadecadienoate (By similarity). In addition to Delta-6 activity, this enzyme exhibits Delta-8 activity with slight biases toward n-3 fatty acyl-CoA substrates (By similarity).</text>
</comment>
<comment type="catalytic activity">
    <reaction evidence="2">
        <text>(9Z,12Z)-octadecadienoyl-CoA + 2 Fe(II)-[cytochrome b5] + O2 + 2 H(+) = (6Z,9Z,12Z)-octadecatrienoyl-CoA + 2 Fe(III)-[cytochrome b5] + 2 H2O</text>
        <dbReference type="Rhea" id="RHEA:47140"/>
        <dbReference type="Rhea" id="RHEA-COMP:10438"/>
        <dbReference type="Rhea" id="RHEA-COMP:10439"/>
        <dbReference type="ChEBI" id="CHEBI:15377"/>
        <dbReference type="ChEBI" id="CHEBI:15378"/>
        <dbReference type="ChEBI" id="CHEBI:15379"/>
        <dbReference type="ChEBI" id="CHEBI:29033"/>
        <dbReference type="ChEBI" id="CHEBI:29034"/>
        <dbReference type="ChEBI" id="CHEBI:57363"/>
        <dbReference type="ChEBI" id="CHEBI:57383"/>
        <dbReference type="EC" id="1.14.19.3"/>
    </reaction>
    <physiologicalReaction direction="left-to-right" evidence="2">
        <dbReference type="Rhea" id="RHEA:47141"/>
    </physiologicalReaction>
</comment>
<comment type="catalytic activity">
    <reaction evidence="2">
        <text>(9Z,12Z,15Z)-octadecatrienoyl-CoA + 2 Fe(II)-[cytochrome b5] + O2 + 2 H(+) = (6Z,9Z,12Z,15Z)-octadecatetraenoyl-CoA + 2 Fe(III)-[cytochrome b5] + 2 H2O</text>
        <dbReference type="Rhea" id="RHEA:47144"/>
        <dbReference type="Rhea" id="RHEA-COMP:10438"/>
        <dbReference type="Rhea" id="RHEA-COMP:10439"/>
        <dbReference type="ChEBI" id="CHEBI:15377"/>
        <dbReference type="ChEBI" id="CHEBI:15378"/>
        <dbReference type="ChEBI" id="CHEBI:15379"/>
        <dbReference type="ChEBI" id="CHEBI:29033"/>
        <dbReference type="ChEBI" id="CHEBI:29034"/>
        <dbReference type="ChEBI" id="CHEBI:71489"/>
        <dbReference type="ChEBI" id="CHEBI:74034"/>
        <dbReference type="EC" id="1.14.19.3"/>
    </reaction>
    <physiologicalReaction direction="left-to-right" evidence="2">
        <dbReference type="Rhea" id="RHEA:47145"/>
    </physiologicalReaction>
</comment>
<comment type="catalytic activity">
    <reaction evidence="3">
        <text>(9Z,12Z,15Z,18Z,21Z)-tetracosapentaenoyl-CoA + 2 Fe(II)-[cytochrome b5] + O2 + 2 H(+) = (6Z,9Z,12Z,15Z,18Z,21Z)-tetracosahexaenoyl-CoA + 2 Fe(III)-[cytochrome b5] + 2 H2O</text>
        <dbReference type="Rhea" id="RHEA:36999"/>
        <dbReference type="Rhea" id="RHEA-COMP:10438"/>
        <dbReference type="Rhea" id="RHEA-COMP:10439"/>
        <dbReference type="ChEBI" id="CHEBI:15377"/>
        <dbReference type="ChEBI" id="CHEBI:15378"/>
        <dbReference type="ChEBI" id="CHEBI:15379"/>
        <dbReference type="ChEBI" id="CHEBI:29033"/>
        <dbReference type="ChEBI" id="CHEBI:29034"/>
        <dbReference type="ChEBI" id="CHEBI:74083"/>
        <dbReference type="ChEBI" id="CHEBI:74086"/>
    </reaction>
    <physiologicalReaction direction="left-to-right" evidence="3">
        <dbReference type="Rhea" id="RHEA:37000"/>
    </physiologicalReaction>
</comment>
<comment type="catalytic activity">
    <reaction evidence="3">
        <text>(11E)-octadecenoyl-CoA + 2 Fe(II)-[cytochrome b5] + O2 + 2 H(+) = (6Z,11E)-octadecadienoyl-CoA + 2 Fe(III)-[cytochrome b5] + 2 H2O</text>
        <dbReference type="Rhea" id="RHEA:46064"/>
        <dbReference type="Rhea" id="RHEA-COMP:10438"/>
        <dbReference type="Rhea" id="RHEA-COMP:10439"/>
        <dbReference type="ChEBI" id="CHEBI:15377"/>
        <dbReference type="ChEBI" id="CHEBI:15378"/>
        <dbReference type="ChEBI" id="CHEBI:15379"/>
        <dbReference type="ChEBI" id="CHEBI:29033"/>
        <dbReference type="ChEBI" id="CHEBI:29034"/>
        <dbReference type="ChEBI" id="CHEBI:74296"/>
        <dbReference type="ChEBI" id="CHEBI:85652"/>
    </reaction>
    <physiologicalReaction direction="left-to-right" evidence="3">
        <dbReference type="Rhea" id="RHEA:46065"/>
    </physiologicalReaction>
</comment>
<comment type="catalytic activity">
    <reaction evidence="1">
        <text>(11Z,14Z)-eicosadienoyl-CoA + 2 Fe(II)-[cytochrome b5] + O2 + 2 H(+) = (8Z,11Z,14Z)-eicosatrienoyl-CoA + 2 Fe(III)-[cytochrome b5] + 2 H2O</text>
        <dbReference type="Rhea" id="RHEA:39567"/>
        <dbReference type="Rhea" id="RHEA-COMP:10438"/>
        <dbReference type="Rhea" id="RHEA-COMP:10439"/>
        <dbReference type="ChEBI" id="CHEBI:15377"/>
        <dbReference type="ChEBI" id="CHEBI:15378"/>
        <dbReference type="ChEBI" id="CHEBI:15379"/>
        <dbReference type="ChEBI" id="CHEBI:29033"/>
        <dbReference type="ChEBI" id="CHEBI:29034"/>
        <dbReference type="ChEBI" id="CHEBI:74264"/>
        <dbReference type="ChEBI" id="CHEBI:76410"/>
    </reaction>
    <physiologicalReaction direction="left-to-right" evidence="1">
        <dbReference type="Rhea" id="RHEA:39568"/>
    </physiologicalReaction>
</comment>
<comment type="catalytic activity">
    <reaction evidence="1">
        <text>(11Z,14Z,17Z)-eicosatrienoyl-CoA + 2 Fe(II)-[cytochrome b5] + O2 + 2 H(+) = (8Z,11Z,14Z,17Z)-eicosatetraenoyl-CoA + 2 Fe(III)-[cytochrome b5] + 2 H2O</text>
        <dbReference type="Rhea" id="RHEA:39571"/>
        <dbReference type="Rhea" id="RHEA-COMP:10438"/>
        <dbReference type="Rhea" id="RHEA-COMP:10439"/>
        <dbReference type="ChEBI" id="CHEBI:15377"/>
        <dbReference type="ChEBI" id="CHEBI:15378"/>
        <dbReference type="ChEBI" id="CHEBI:15379"/>
        <dbReference type="ChEBI" id="CHEBI:29033"/>
        <dbReference type="ChEBI" id="CHEBI:29034"/>
        <dbReference type="ChEBI" id="CHEBI:74265"/>
        <dbReference type="ChEBI" id="CHEBI:74328"/>
    </reaction>
    <physiologicalReaction direction="left-to-right" evidence="1">
        <dbReference type="Rhea" id="RHEA:39572"/>
    </physiologicalReaction>
</comment>
<comment type="pathway">
    <text evidence="2">Lipid metabolism; polyunsaturated fatty acid biosynthesis.</text>
</comment>
<comment type="subcellular location">
    <subcellularLocation>
        <location evidence="6">Endoplasmic reticulum membrane</location>
        <topology evidence="4">Multi-pass membrane protein</topology>
    </subcellularLocation>
</comment>
<comment type="domain">
    <text evidence="2">The protein sequence includes a number of characteristic features of microsomal fatty acid desaturases including the three histidine boxes HXXXH, HXXHH, and QXXHH (these domains may contain the active site and/or be involved in metal ion binding), and the N-terminal cytochrome b5 domain containing the heme-binding motif, HPGG, similar to that of other fatty acid desaturases.</text>
</comment>
<comment type="similarity">
    <text evidence="6">Belongs to the fatty acid desaturase type 1 family.</text>
</comment>